<feature type="chain" id="PRO_0000213239" description="Global transcriptional regulator CodY">
    <location>
        <begin position="1"/>
        <end position="261"/>
    </location>
</feature>
<feature type="DNA-binding region" description="H-T-H motif" evidence="1">
    <location>
        <begin position="207"/>
        <end position="226"/>
    </location>
</feature>
<feature type="region of interest" description="GAF domain" evidence="1">
    <location>
        <begin position="1"/>
        <end position="159"/>
    </location>
</feature>
<sequence>MPNLLEKTRKITSILQRSVDSLDAELPYNTMAAQLADIIDCNACIINGGGNLLGYAMKYKTNTDRVEEFFETKQFPDYYVKSASRVYDTEANLSVDNDLSIFPVETKENFQDGITTIAPIYGGGMRLGTFIIWRNDKEFSDDDLILVEIASTVVGIQLLNLQTENLEENIRKQTAVTMAINTLSYSEMKAVAAILGELDGLEGRLTASVIADRIGITRSVIVNALRKLESAGIIESRSLGMKGTYLKVINEGIFDKLKEYN</sequence>
<reference key="1">
    <citation type="journal article" date="2002" name="Mol. Microbiol.">
        <title>Genome sequence of Streptococcus agalactiae, a pathogen causing invasive neonatal disease.</title>
        <authorList>
            <person name="Glaser P."/>
            <person name="Rusniok C."/>
            <person name="Buchrieser C."/>
            <person name="Chevalier F."/>
            <person name="Frangeul L."/>
            <person name="Msadek T."/>
            <person name="Zouine M."/>
            <person name="Couve E."/>
            <person name="Lalioui L."/>
            <person name="Poyart C."/>
            <person name="Trieu-Cuot P."/>
            <person name="Kunst F."/>
        </authorList>
    </citation>
    <scope>NUCLEOTIDE SEQUENCE [LARGE SCALE GENOMIC DNA]</scope>
    <source>
        <strain>NEM316</strain>
    </source>
</reference>
<accession>P63846</accession>
<accession>P59387</accession>
<keyword id="KW-0963">Cytoplasm</keyword>
<keyword id="KW-0238">DNA-binding</keyword>
<keyword id="KW-0678">Repressor</keyword>
<keyword id="KW-0804">Transcription</keyword>
<keyword id="KW-0805">Transcription regulation</keyword>
<dbReference type="EMBL" id="AL766852">
    <property type="protein sequence ID" value="CAD47378.1"/>
    <property type="molecule type" value="Genomic_DNA"/>
</dbReference>
<dbReference type="RefSeq" id="WP_001133183.1">
    <property type="nucleotide sequence ID" value="NC_004368.1"/>
</dbReference>
<dbReference type="SMR" id="P63846"/>
<dbReference type="GeneID" id="66886521"/>
<dbReference type="KEGG" id="san:gbs1719"/>
<dbReference type="eggNOG" id="COG4465">
    <property type="taxonomic scope" value="Bacteria"/>
</dbReference>
<dbReference type="HOGENOM" id="CLU_089581_0_0_9"/>
<dbReference type="Proteomes" id="UP000000823">
    <property type="component" value="Chromosome"/>
</dbReference>
<dbReference type="GO" id="GO:0005737">
    <property type="term" value="C:cytoplasm"/>
    <property type="evidence" value="ECO:0007669"/>
    <property type="project" value="UniProtKB-SubCell"/>
</dbReference>
<dbReference type="GO" id="GO:0003677">
    <property type="term" value="F:DNA binding"/>
    <property type="evidence" value="ECO:0007669"/>
    <property type="project" value="UniProtKB-UniRule"/>
</dbReference>
<dbReference type="GO" id="GO:0003700">
    <property type="term" value="F:DNA-binding transcription factor activity"/>
    <property type="evidence" value="ECO:0007669"/>
    <property type="project" value="InterPro"/>
</dbReference>
<dbReference type="GO" id="GO:0005525">
    <property type="term" value="F:GTP binding"/>
    <property type="evidence" value="ECO:0007669"/>
    <property type="project" value="InterPro"/>
</dbReference>
<dbReference type="GO" id="GO:0045892">
    <property type="term" value="P:negative regulation of DNA-templated transcription"/>
    <property type="evidence" value="ECO:0007669"/>
    <property type="project" value="UniProtKB-UniRule"/>
</dbReference>
<dbReference type="CDD" id="cd00090">
    <property type="entry name" value="HTH_ARSR"/>
    <property type="match status" value="1"/>
</dbReference>
<dbReference type="FunFam" id="1.10.10.10:FF:000034">
    <property type="entry name" value="GTP-sensing transcriptional pleiotropic repressor CodY"/>
    <property type="match status" value="1"/>
</dbReference>
<dbReference type="FunFam" id="3.30.450.40:FF:000003">
    <property type="entry name" value="GTP-sensing transcriptional pleiotropic repressor CodY"/>
    <property type="match status" value="1"/>
</dbReference>
<dbReference type="Gene3D" id="3.30.450.40">
    <property type="match status" value="1"/>
</dbReference>
<dbReference type="Gene3D" id="1.10.10.10">
    <property type="entry name" value="Winged helix-like DNA-binding domain superfamily/Winged helix DNA-binding domain"/>
    <property type="match status" value="1"/>
</dbReference>
<dbReference type="HAMAP" id="MF_00621">
    <property type="entry name" value="HTH_type_CodY"/>
    <property type="match status" value="1"/>
</dbReference>
<dbReference type="InterPro" id="IPR011991">
    <property type="entry name" value="ArsR-like_HTH"/>
</dbReference>
<dbReference type="InterPro" id="IPR014154">
    <property type="entry name" value="CodY"/>
</dbReference>
<dbReference type="InterPro" id="IPR029016">
    <property type="entry name" value="GAF-like_dom_sf"/>
</dbReference>
<dbReference type="InterPro" id="IPR013198">
    <property type="entry name" value="GTP_trans_reg_CodY_C"/>
</dbReference>
<dbReference type="InterPro" id="IPR010312">
    <property type="entry name" value="Transc_reg_CodY_N"/>
</dbReference>
<dbReference type="InterPro" id="IPR036388">
    <property type="entry name" value="WH-like_DNA-bd_sf"/>
</dbReference>
<dbReference type="InterPro" id="IPR036390">
    <property type="entry name" value="WH_DNA-bd_sf"/>
</dbReference>
<dbReference type="NCBIfam" id="TIGR02787">
    <property type="entry name" value="codY_Gpos"/>
    <property type="match status" value="1"/>
</dbReference>
<dbReference type="NCBIfam" id="NF003170">
    <property type="entry name" value="PRK04158.1"/>
    <property type="match status" value="1"/>
</dbReference>
<dbReference type="PANTHER" id="PTHR40062:SF1">
    <property type="entry name" value="GLOBAL TRANSCRIPTIONAL REGULATOR CODY"/>
    <property type="match status" value="1"/>
</dbReference>
<dbReference type="PANTHER" id="PTHR40062">
    <property type="entry name" value="GTP-SENSING TRANSCRIPTIONAL PLEIOTROPIC REPRESSOR CODY"/>
    <property type="match status" value="1"/>
</dbReference>
<dbReference type="Pfam" id="PF06018">
    <property type="entry name" value="CodY"/>
    <property type="match status" value="1"/>
</dbReference>
<dbReference type="Pfam" id="PF08222">
    <property type="entry name" value="HTH_CodY"/>
    <property type="match status" value="1"/>
</dbReference>
<dbReference type="PIRSF" id="PIRSF011572">
    <property type="entry name" value="GTP_sensing_CodY"/>
    <property type="match status" value="1"/>
</dbReference>
<dbReference type="SUPFAM" id="SSF46785">
    <property type="entry name" value="Winged helix' DNA-binding domain"/>
    <property type="match status" value="1"/>
</dbReference>
<protein>
    <recommendedName>
        <fullName evidence="1">Global transcriptional regulator CodY</fullName>
    </recommendedName>
</protein>
<name>CODY_STRA3</name>
<proteinExistence type="inferred from homology"/>
<comment type="function">
    <text evidence="1">DNA-binding global transcriptional regulator which is involved in the adaptive response to starvation and acts by directly or indirectly controlling the expression of numerous genes in response to nutrient availability. During rapid exponential growth, CodY is highly active and represses genes whose products allow adaptation to nutrient depletion.</text>
</comment>
<comment type="subcellular location">
    <subcellularLocation>
        <location evidence="1">Cytoplasm</location>
    </subcellularLocation>
</comment>
<comment type="similarity">
    <text evidence="1">Belongs to the CodY family.</text>
</comment>
<evidence type="ECO:0000255" key="1">
    <source>
        <dbReference type="HAMAP-Rule" id="MF_00621"/>
    </source>
</evidence>
<organism>
    <name type="scientific">Streptococcus agalactiae serotype III (strain NEM316)</name>
    <dbReference type="NCBI Taxonomy" id="211110"/>
    <lineage>
        <taxon>Bacteria</taxon>
        <taxon>Bacillati</taxon>
        <taxon>Bacillota</taxon>
        <taxon>Bacilli</taxon>
        <taxon>Lactobacillales</taxon>
        <taxon>Streptococcaceae</taxon>
        <taxon>Streptococcus</taxon>
    </lineage>
</organism>
<gene>
    <name evidence="1" type="primary">codY</name>
    <name type="ordered locus">gbs1719</name>
</gene>